<evidence type="ECO:0000255" key="1">
    <source>
        <dbReference type="HAMAP-Rule" id="MF_00518"/>
    </source>
</evidence>
<accession>Q3A002</accession>
<protein>
    <recommendedName>
        <fullName evidence="1">D-aminoacyl-tRNA deacylase</fullName>
        <shortName evidence="1">DTD</shortName>
        <ecNumber evidence="1">3.1.1.96</ecNumber>
    </recommendedName>
    <alternativeName>
        <fullName evidence="1">Gly-tRNA(Ala) deacylase</fullName>
    </alternativeName>
</protein>
<name>DTD_SYNC1</name>
<comment type="function">
    <text evidence="1">An aminoacyl-tRNA editing enzyme that deacylates mischarged D-aminoacyl-tRNAs. Also deacylates mischarged glycyl-tRNA(Ala), protecting cells against glycine mischarging by AlaRS. Acts via tRNA-based rather than protein-based catalysis; rejects L-amino acids rather than detecting D-amino acids in the active site. By recycling D-aminoacyl-tRNA to D-amino acids and free tRNA molecules, this enzyme counteracts the toxicity associated with the formation of D-aminoacyl-tRNA entities in vivo and helps enforce protein L-homochirality.</text>
</comment>
<comment type="catalytic activity">
    <reaction evidence="1">
        <text>glycyl-tRNA(Ala) + H2O = tRNA(Ala) + glycine + H(+)</text>
        <dbReference type="Rhea" id="RHEA:53744"/>
        <dbReference type="Rhea" id="RHEA-COMP:9657"/>
        <dbReference type="Rhea" id="RHEA-COMP:13640"/>
        <dbReference type="ChEBI" id="CHEBI:15377"/>
        <dbReference type="ChEBI" id="CHEBI:15378"/>
        <dbReference type="ChEBI" id="CHEBI:57305"/>
        <dbReference type="ChEBI" id="CHEBI:78442"/>
        <dbReference type="ChEBI" id="CHEBI:78522"/>
        <dbReference type="EC" id="3.1.1.96"/>
    </reaction>
</comment>
<comment type="catalytic activity">
    <reaction evidence="1">
        <text>a D-aminoacyl-tRNA + H2O = a tRNA + a D-alpha-amino acid + H(+)</text>
        <dbReference type="Rhea" id="RHEA:13953"/>
        <dbReference type="Rhea" id="RHEA-COMP:10123"/>
        <dbReference type="Rhea" id="RHEA-COMP:10124"/>
        <dbReference type="ChEBI" id="CHEBI:15377"/>
        <dbReference type="ChEBI" id="CHEBI:15378"/>
        <dbReference type="ChEBI" id="CHEBI:59871"/>
        <dbReference type="ChEBI" id="CHEBI:78442"/>
        <dbReference type="ChEBI" id="CHEBI:79333"/>
        <dbReference type="EC" id="3.1.1.96"/>
    </reaction>
</comment>
<comment type="subunit">
    <text evidence="1">Homodimer.</text>
</comment>
<comment type="subcellular location">
    <subcellularLocation>
        <location evidence="1">Cytoplasm</location>
    </subcellularLocation>
</comment>
<comment type="domain">
    <text evidence="1">A Gly-cisPro motif from one monomer fits into the active site of the other monomer to allow specific chiral rejection of L-amino acids.</text>
</comment>
<comment type="similarity">
    <text evidence="1">Belongs to the DTD family.</text>
</comment>
<keyword id="KW-0963">Cytoplasm</keyword>
<keyword id="KW-0378">Hydrolase</keyword>
<keyword id="KW-1185">Reference proteome</keyword>
<keyword id="KW-0694">RNA-binding</keyword>
<keyword id="KW-0820">tRNA-binding</keyword>
<organism>
    <name type="scientific">Syntrophotalea carbinolica (strain DSM 2380 / NBRC 103641 / GraBd1)</name>
    <name type="common">Pelobacter carbinolicus</name>
    <dbReference type="NCBI Taxonomy" id="338963"/>
    <lineage>
        <taxon>Bacteria</taxon>
        <taxon>Pseudomonadati</taxon>
        <taxon>Thermodesulfobacteriota</taxon>
        <taxon>Desulfuromonadia</taxon>
        <taxon>Desulfuromonadales</taxon>
        <taxon>Syntrophotaleaceae</taxon>
        <taxon>Syntrophotalea</taxon>
    </lineage>
</organism>
<proteinExistence type="inferred from homology"/>
<gene>
    <name evidence="1" type="primary">dtd</name>
    <name type="ordered locus">Pcar_3070</name>
</gene>
<sequence>MRAVLQRVTQAHVSVDEEIVGAIGPGLMVLLGVEQGDGPQDAAQLAKKTAELRVFEDAEGKMNRSVEDIGGQLLVVSQFTLAADCRKGRRPGFSRAAAADTANSLYLDYIEQLRQRGLTVATGRFQAMMQVHLVNDGPVTFLLDSHKVF</sequence>
<dbReference type="EC" id="3.1.1.96" evidence="1"/>
<dbReference type="EMBL" id="CP000142">
    <property type="protein sequence ID" value="ABA90305.1"/>
    <property type="molecule type" value="Genomic_DNA"/>
</dbReference>
<dbReference type="RefSeq" id="WP_011342865.1">
    <property type="nucleotide sequence ID" value="NC_007498.2"/>
</dbReference>
<dbReference type="SMR" id="Q3A002"/>
<dbReference type="STRING" id="338963.Pcar_3070"/>
<dbReference type="KEGG" id="pca:Pcar_3070"/>
<dbReference type="eggNOG" id="COG1490">
    <property type="taxonomic scope" value="Bacteria"/>
</dbReference>
<dbReference type="HOGENOM" id="CLU_076901_1_0_7"/>
<dbReference type="OrthoDB" id="9801395at2"/>
<dbReference type="Proteomes" id="UP000002534">
    <property type="component" value="Chromosome"/>
</dbReference>
<dbReference type="GO" id="GO:0005737">
    <property type="term" value="C:cytoplasm"/>
    <property type="evidence" value="ECO:0007669"/>
    <property type="project" value="UniProtKB-SubCell"/>
</dbReference>
<dbReference type="GO" id="GO:0051500">
    <property type="term" value="F:D-tyrosyl-tRNA(Tyr) deacylase activity"/>
    <property type="evidence" value="ECO:0007669"/>
    <property type="project" value="TreeGrafter"/>
</dbReference>
<dbReference type="GO" id="GO:0106026">
    <property type="term" value="F:Gly-tRNA(Ala) deacylase activity"/>
    <property type="evidence" value="ECO:0007669"/>
    <property type="project" value="UniProtKB-UniRule"/>
</dbReference>
<dbReference type="GO" id="GO:0043908">
    <property type="term" value="F:Ser(Gly)-tRNA(Ala) hydrolase activity"/>
    <property type="evidence" value="ECO:0007669"/>
    <property type="project" value="UniProtKB-UniRule"/>
</dbReference>
<dbReference type="GO" id="GO:0000049">
    <property type="term" value="F:tRNA binding"/>
    <property type="evidence" value="ECO:0007669"/>
    <property type="project" value="UniProtKB-UniRule"/>
</dbReference>
<dbReference type="GO" id="GO:0019478">
    <property type="term" value="P:D-amino acid catabolic process"/>
    <property type="evidence" value="ECO:0007669"/>
    <property type="project" value="UniProtKB-UniRule"/>
</dbReference>
<dbReference type="CDD" id="cd00563">
    <property type="entry name" value="Dtyr_deacylase"/>
    <property type="match status" value="1"/>
</dbReference>
<dbReference type="FunFam" id="3.50.80.10:FF:000001">
    <property type="entry name" value="D-aminoacyl-tRNA deacylase"/>
    <property type="match status" value="1"/>
</dbReference>
<dbReference type="Gene3D" id="3.50.80.10">
    <property type="entry name" value="D-tyrosyl-tRNA(Tyr) deacylase"/>
    <property type="match status" value="1"/>
</dbReference>
<dbReference type="HAMAP" id="MF_00518">
    <property type="entry name" value="Deacylase_Dtd"/>
    <property type="match status" value="1"/>
</dbReference>
<dbReference type="InterPro" id="IPR003732">
    <property type="entry name" value="Daa-tRNA_deacyls_DTD"/>
</dbReference>
<dbReference type="InterPro" id="IPR023509">
    <property type="entry name" value="DTD-like_sf"/>
</dbReference>
<dbReference type="NCBIfam" id="TIGR00256">
    <property type="entry name" value="D-aminoacyl-tRNA deacylase"/>
    <property type="match status" value="1"/>
</dbReference>
<dbReference type="PANTHER" id="PTHR10472:SF5">
    <property type="entry name" value="D-AMINOACYL-TRNA DEACYLASE 1"/>
    <property type="match status" value="1"/>
</dbReference>
<dbReference type="PANTHER" id="PTHR10472">
    <property type="entry name" value="D-TYROSYL-TRNA TYR DEACYLASE"/>
    <property type="match status" value="1"/>
</dbReference>
<dbReference type="Pfam" id="PF02580">
    <property type="entry name" value="Tyr_Deacylase"/>
    <property type="match status" value="1"/>
</dbReference>
<dbReference type="SUPFAM" id="SSF69500">
    <property type="entry name" value="DTD-like"/>
    <property type="match status" value="1"/>
</dbReference>
<feature type="chain" id="PRO_0000259294" description="D-aminoacyl-tRNA deacylase">
    <location>
        <begin position="1"/>
        <end position="149"/>
    </location>
</feature>
<feature type="short sequence motif" description="Gly-cisPro motif, important for rejection of L-amino acids" evidence="1">
    <location>
        <begin position="137"/>
        <end position="138"/>
    </location>
</feature>
<reference key="1">
    <citation type="submission" date="2005-10" db="EMBL/GenBank/DDBJ databases">
        <title>Complete sequence of Pelobacter carbinolicus DSM 2380.</title>
        <authorList>
            <person name="Copeland A."/>
            <person name="Lucas S."/>
            <person name="Lapidus A."/>
            <person name="Barry K."/>
            <person name="Detter J.C."/>
            <person name="Glavina T."/>
            <person name="Hammon N."/>
            <person name="Israni S."/>
            <person name="Pitluck S."/>
            <person name="Chertkov O."/>
            <person name="Schmutz J."/>
            <person name="Larimer F."/>
            <person name="Land M."/>
            <person name="Kyrpides N."/>
            <person name="Ivanova N."/>
            <person name="Richardson P."/>
        </authorList>
    </citation>
    <scope>NUCLEOTIDE SEQUENCE [LARGE SCALE GENOMIC DNA]</scope>
    <source>
        <strain>DSM 2380 / NBRC 103641 / GraBd1</strain>
    </source>
</reference>